<evidence type="ECO:0000255" key="1">
    <source>
        <dbReference type="HAMAP-Rule" id="MF_03001"/>
    </source>
</evidence>
<evidence type="ECO:0000256" key="2">
    <source>
        <dbReference type="SAM" id="MobiDB-lite"/>
    </source>
</evidence>
<dbReference type="EMBL" id="BA000049">
    <property type="protein sequence ID" value="BAE55898.1"/>
    <property type="molecule type" value="Genomic_DNA"/>
</dbReference>
<dbReference type="RefSeq" id="XP_001817900.1">
    <property type="nucleotide sequence ID" value="XM_001817848.2"/>
</dbReference>
<dbReference type="SMR" id="Q2URB7"/>
<dbReference type="STRING" id="510516.Q2URB7"/>
<dbReference type="EnsemblFungi" id="BAE55898">
    <property type="protein sequence ID" value="BAE55898"/>
    <property type="gene ID" value="AO090005000892"/>
</dbReference>
<dbReference type="GeneID" id="5989845"/>
<dbReference type="KEGG" id="aor:AO090005000892"/>
<dbReference type="VEuPathDB" id="FungiDB:AO090005000892"/>
<dbReference type="HOGENOM" id="CLU_011152_4_0_1"/>
<dbReference type="OMA" id="LWGGPQF"/>
<dbReference type="OrthoDB" id="41769at5052"/>
<dbReference type="Proteomes" id="UP000006564">
    <property type="component" value="Chromosome 1"/>
</dbReference>
<dbReference type="GO" id="GO:0010494">
    <property type="term" value="C:cytoplasmic stress granule"/>
    <property type="evidence" value="ECO:0007669"/>
    <property type="project" value="EnsemblFungi"/>
</dbReference>
<dbReference type="GO" id="GO:0016282">
    <property type="term" value="C:eukaryotic 43S preinitiation complex"/>
    <property type="evidence" value="ECO:0007669"/>
    <property type="project" value="UniProtKB-UniRule"/>
</dbReference>
<dbReference type="GO" id="GO:0033290">
    <property type="term" value="C:eukaryotic 48S preinitiation complex"/>
    <property type="evidence" value="ECO:0007669"/>
    <property type="project" value="UniProtKB-UniRule"/>
</dbReference>
<dbReference type="GO" id="GO:0071540">
    <property type="term" value="C:eukaryotic translation initiation factor 3 complex, eIF3e"/>
    <property type="evidence" value="ECO:0007669"/>
    <property type="project" value="EnsemblFungi"/>
</dbReference>
<dbReference type="GO" id="GO:0071541">
    <property type="term" value="C:eukaryotic translation initiation factor 3 complex, eIF3m"/>
    <property type="evidence" value="ECO:0007669"/>
    <property type="project" value="EnsemblFungi"/>
</dbReference>
<dbReference type="GO" id="GO:0043614">
    <property type="term" value="C:multi-eIF complex"/>
    <property type="evidence" value="ECO:0007669"/>
    <property type="project" value="EnsemblFungi"/>
</dbReference>
<dbReference type="GO" id="GO:0042802">
    <property type="term" value="F:identical protein binding"/>
    <property type="evidence" value="ECO:0007669"/>
    <property type="project" value="EnsemblFungi"/>
</dbReference>
<dbReference type="GO" id="GO:0003723">
    <property type="term" value="F:RNA binding"/>
    <property type="evidence" value="ECO:0007669"/>
    <property type="project" value="UniProtKB-UniRule"/>
</dbReference>
<dbReference type="GO" id="GO:0003743">
    <property type="term" value="F:translation initiation factor activity"/>
    <property type="evidence" value="ECO:0007669"/>
    <property type="project" value="UniProtKB-UniRule"/>
</dbReference>
<dbReference type="GO" id="GO:0031369">
    <property type="term" value="F:translation initiation factor binding"/>
    <property type="evidence" value="ECO:0007669"/>
    <property type="project" value="InterPro"/>
</dbReference>
<dbReference type="GO" id="GO:0001732">
    <property type="term" value="P:formation of cytoplasmic translation initiation complex"/>
    <property type="evidence" value="ECO:0007669"/>
    <property type="project" value="UniProtKB-UniRule"/>
</dbReference>
<dbReference type="CDD" id="cd12278">
    <property type="entry name" value="RRM_eIF3B"/>
    <property type="match status" value="1"/>
</dbReference>
<dbReference type="FunFam" id="2.130.10.10:FF:000419">
    <property type="entry name" value="Eukaryotic translation initiation factor 3 subunit B"/>
    <property type="match status" value="1"/>
</dbReference>
<dbReference type="FunFam" id="3.30.70.330:FF:000235">
    <property type="entry name" value="Eukaryotic translation initiation factor 3 subunit B"/>
    <property type="match status" value="1"/>
</dbReference>
<dbReference type="Gene3D" id="3.30.70.330">
    <property type="match status" value="1"/>
</dbReference>
<dbReference type="Gene3D" id="2.130.10.10">
    <property type="entry name" value="YVTN repeat-like/Quinoprotein amine dehydrogenase"/>
    <property type="match status" value="2"/>
</dbReference>
<dbReference type="HAMAP" id="MF_03001">
    <property type="entry name" value="eIF3b"/>
    <property type="match status" value="1"/>
</dbReference>
<dbReference type="InterPro" id="IPR011400">
    <property type="entry name" value="EIF3B"/>
</dbReference>
<dbReference type="InterPro" id="IPR034363">
    <property type="entry name" value="eIF3B_RRM"/>
</dbReference>
<dbReference type="InterPro" id="IPR012677">
    <property type="entry name" value="Nucleotide-bd_a/b_plait_sf"/>
</dbReference>
<dbReference type="InterPro" id="IPR035979">
    <property type="entry name" value="RBD_domain_sf"/>
</dbReference>
<dbReference type="InterPro" id="IPR000504">
    <property type="entry name" value="RRM_dom"/>
</dbReference>
<dbReference type="InterPro" id="IPR013979">
    <property type="entry name" value="TIF_beta_prop-like"/>
</dbReference>
<dbReference type="InterPro" id="IPR015943">
    <property type="entry name" value="WD40/YVTN_repeat-like_dom_sf"/>
</dbReference>
<dbReference type="PANTHER" id="PTHR14068">
    <property type="entry name" value="EUKARYOTIC TRANSLATION INITIATION FACTOR 3 EIF3 -RELATED"/>
    <property type="match status" value="1"/>
</dbReference>
<dbReference type="PANTHER" id="PTHR14068:SF0">
    <property type="entry name" value="EUKARYOTIC TRANSLATION INITIATION FACTOR 3 SUBUNIT B"/>
    <property type="match status" value="1"/>
</dbReference>
<dbReference type="Pfam" id="PF08662">
    <property type="entry name" value="eIF2A"/>
    <property type="match status" value="1"/>
</dbReference>
<dbReference type="Pfam" id="PF00076">
    <property type="entry name" value="RRM_1"/>
    <property type="match status" value="1"/>
</dbReference>
<dbReference type="PIRSF" id="PIRSF036424">
    <property type="entry name" value="eIF3b"/>
    <property type="match status" value="1"/>
</dbReference>
<dbReference type="SMART" id="SM00360">
    <property type="entry name" value="RRM"/>
    <property type="match status" value="1"/>
</dbReference>
<dbReference type="SUPFAM" id="SSF54928">
    <property type="entry name" value="RNA-binding domain, RBD"/>
    <property type="match status" value="1"/>
</dbReference>
<dbReference type="SUPFAM" id="SSF69322">
    <property type="entry name" value="Tricorn protease domain 2"/>
    <property type="match status" value="1"/>
</dbReference>
<dbReference type="PROSITE" id="PS50102">
    <property type="entry name" value="RRM"/>
    <property type="match status" value="1"/>
</dbReference>
<reference key="1">
    <citation type="journal article" date="2005" name="Nature">
        <title>Genome sequencing and analysis of Aspergillus oryzae.</title>
        <authorList>
            <person name="Machida M."/>
            <person name="Asai K."/>
            <person name="Sano M."/>
            <person name="Tanaka T."/>
            <person name="Kumagai T."/>
            <person name="Terai G."/>
            <person name="Kusumoto K."/>
            <person name="Arima T."/>
            <person name="Akita O."/>
            <person name="Kashiwagi Y."/>
            <person name="Abe K."/>
            <person name="Gomi K."/>
            <person name="Horiuchi H."/>
            <person name="Kitamoto K."/>
            <person name="Kobayashi T."/>
            <person name="Takeuchi M."/>
            <person name="Denning D.W."/>
            <person name="Galagan J.E."/>
            <person name="Nierman W.C."/>
            <person name="Yu J."/>
            <person name="Archer D.B."/>
            <person name="Bennett J.W."/>
            <person name="Bhatnagar D."/>
            <person name="Cleveland T.E."/>
            <person name="Fedorova N.D."/>
            <person name="Gotoh O."/>
            <person name="Horikawa H."/>
            <person name="Hosoyama A."/>
            <person name="Ichinomiya M."/>
            <person name="Igarashi R."/>
            <person name="Iwashita K."/>
            <person name="Juvvadi P.R."/>
            <person name="Kato M."/>
            <person name="Kato Y."/>
            <person name="Kin T."/>
            <person name="Kokubun A."/>
            <person name="Maeda H."/>
            <person name="Maeyama N."/>
            <person name="Maruyama J."/>
            <person name="Nagasaki H."/>
            <person name="Nakajima T."/>
            <person name="Oda K."/>
            <person name="Okada K."/>
            <person name="Paulsen I."/>
            <person name="Sakamoto K."/>
            <person name="Sawano T."/>
            <person name="Takahashi M."/>
            <person name="Takase K."/>
            <person name="Terabayashi Y."/>
            <person name="Wortman J.R."/>
            <person name="Yamada O."/>
            <person name="Yamagata Y."/>
            <person name="Anazawa H."/>
            <person name="Hata Y."/>
            <person name="Koide Y."/>
            <person name="Komori T."/>
            <person name="Koyama Y."/>
            <person name="Minetoki T."/>
            <person name="Suharnan S."/>
            <person name="Tanaka A."/>
            <person name="Isono K."/>
            <person name="Kuhara S."/>
            <person name="Ogasawara N."/>
            <person name="Kikuchi H."/>
        </authorList>
    </citation>
    <scope>NUCLEOTIDE SEQUENCE [LARGE SCALE GENOMIC DNA]</scope>
    <source>
        <strain>ATCC 42149 / RIB 40</strain>
    </source>
</reference>
<protein>
    <recommendedName>
        <fullName evidence="1">Eukaryotic translation initiation factor 3 subunit B</fullName>
        <shortName evidence="1">eIF3b</shortName>
    </recommendedName>
    <alternativeName>
        <fullName evidence="1">Eukaryotic translation initiation factor 3 90 kDa subunit homolog</fullName>
        <shortName evidence="1">eIF3 p90</shortName>
    </alternativeName>
    <alternativeName>
        <fullName>Translation initiation factor eIF3 p90 subunit homolog</fullName>
    </alternativeName>
</protein>
<proteinExistence type="inferred from homology"/>
<accession>Q2URB7</accession>
<sequence>MAPSFDTLSEQDLHEEEEEEIDFSDLKEQFEVKLEEGLDTFIVIDGLPIVPEESRQKLIKFLLRKLNAVGHTSEDAVFMPTNDKNMSEGFAFVEYETPEQAIAAVKQLHGTPLDKKHTLAVNKLMDIDRYGREGRIDEEYKPPTVEPFKEKEHLRSWLSDPNARDQFALYRNDKVGVFWNNKNNPPENVVDRAHWTQLFVQWSPKGTYLASVHPQGVQLWGGPAFSKQKQFPHPFVQLVEFSPGESYLTTWSSRPIQVEEGHPVLSFEEDGKNIIVWDIVSGKPLRSFVSHDLAGGPVEGDAAPKKKVQWPAFKWSADEKYVARMLQGQSISIYELPRMNLLGKTSVKIDGVMDFEWSPATVTRDGVKQYEQLLSFWTPEIGSNPARVALMSVPSKEIVRTRNLFNVSDVKLHWQSQGTYVCVKVDRHSKSKKSMATNLEIFRVREKGVPVEVVDSLKDTVINFAWEPNGGRFVLITTGEAPSGAAVLPKTSVSFFAPEKKGPQAGNFKLVRTIEKKTSNAIYWSPKGRFVVVATVHSQSNFDLDFWDMDFEGEKAEGEKDLAANLQLMKTVEHYGVTDIDWDPTGRYVVSSASVWTHSMENGWNIHTFAGQTLAEHPTDKFKQFVWRPRPPTLLSKEEQKQVRKNLREYSKEFDEEDKYAVDIANTAVVETRKRVLNEWVAWLRREKELMAEEKDAYGIPEDADDAKVAKDAPPVSEDQGEAVVEEIVEEIVEENEEVIG</sequence>
<comment type="function">
    <text evidence="1">RNA-binding component of the eukaryotic translation initiation factor 3 (eIF-3) complex, which is involved in protein synthesis of a specialized repertoire of mRNAs and, together with other initiation factors, stimulates binding of mRNA and methionyl-tRNAi to the 40S ribosome. The eIF-3 complex specifically targets and initiates translation of a subset of mRNAs involved in cell proliferation.</text>
</comment>
<comment type="subunit">
    <text evidence="1">Component of the eukaryotic translation initiation factor 3 (eIF-3) complex.</text>
</comment>
<comment type="subcellular location">
    <subcellularLocation>
        <location evidence="1">Cytoplasm</location>
    </subcellularLocation>
</comment>
<comment type="similarity">
    <text evidence="1">Belongs to the eIF-3 subunit B family.</text>
</comment>
<organism>
    <name type="scientific">Aspergillus oryzae (strain ATCC 42149 / RIB 40)</name>
    <name type="common">Yellow koji mold</name>
    <dbReference type="NCBI Taxonomy" id="510516"/>
    <lineage>
        <taxon>Eukaryota</taxon>
        <taxon>Fungi</taxon>
        <taxon>Dikarya</taxon>
        <taxon>Ascomycota</taxon>
        <taxon>Pezizomycotina</taxon>
        <taxon>Eurotiomycetes</taxon>
        <taxon>Eurotiomycetidae</taxon>
        <taxon>Eurotiales</taxon>
        <taxon>Aspergillaceae</taxon>
        <taxon>Aspergillus</taxon>
        <taxon>Aspergillus subgen. Circumdati</taxon>
    </lineage>
</organism>
<name>EIF3B_ASPOR</name>
<feature type="chain" id="PRO_0000363811" description="Eukaryotic translation initiation factor 3 subunit B">
    <location>
        <begin position="1"/>
        <end position="741"/>
    </location>
</feature>
<feature type="domain" description="RRM" evidence="1">
    <location>
        <begin position="40"/>
        <end position="126"/>
    </location>
</feature>
<feature type="repeat" description="WD 1">
    <location>
        <begin position="193"/>
        <end position="230"/>
    </location>
</feature>
<feature type="repeat" description="WD 2">
    <location>
        <begin position="232"/>
        <end position="289"/>
    </location>
</feature>
<feature type="repeat" description="WD 3">
    <location>
        <begin position="303"/>
        <end position="344"/>
    </location>
</feature>
<feature type="repeat" description="WD 4">
    <location>
        <begin position="514"/>
        <end position="557"/>
    </location>
</feature>
<feature type="repeat" description="WD 5">
    <location>
        <begin position="572"/>
        <end position="610"/>
    </location>
</feature>
<feature type="region of interest" description="Disordered" evidence="2">
    <location>
        <begin position="1"/>
        <end position="21"/>
    </location>
</feature>
<feature type="region of interest" description="Disordered" evidence="2">
    <location>
        <begin position="696"/>
        <end position="723"/>
    </location>
</feature>
<feature type="compositionally biased region" description="Polar residues" evidence="2">
    <location>
        <begin position="1"/>
        <end position="10"/>
    </location>
</feature>
<keyword id="KW-0963">Cytoplasm</keyword>
<keyword id="KW-0396">Initiation factor</keyword>
<keyword id="KW-0648">Protein biosynthesis</keyword>
<keyword id="KW-1185">Reference proteome</keyword>
<keyword id="KW-0677">Repeat</keyword>
<keyword id="KW-0694">RNA-binding</keyword>
<keyword id="KW-0853">WD repeat</keyword>
<gene>
    <name type="primary">prt1</name>
    <name type="ORF">AO090005000892</name>
</gene>